<proteinExistence type="inferred from homology"/>
<organism>
    <name type="scientific">Penicillium rubens (strain ATCC 28089 / DSM 1075 / NRRL 1951 / Wisconsin 54-1255)</name>
    <name type="common">Penicillium chrysogenum</name>
    <dbReference type="NCBI Taxonomy" id="500485"/>
    <lineage>
        <taxon>Eukaryota</taxon>
        <taxon>Fungi</taxon>
        <taxon>Dikarya</taxon>
        <taxon>Ascomycota</taxon>
        <taxon>Pezizomycotina</taxon>
        <taxon>Eurotiomycetes</taxon>
        <taxon>Eurotiomycetidae</taxon>
        <taxon>Eurotiales</taxon>
        <taxon>Aspergillaceae</taxon>
        <taxon>Penicillium</taxon>
        <taxon>Penicillium chrysogenum species complex</taxon>
    </lineage>
</organism>
<dbReference type="EMBL" id="AM920431">
    <property type="protein sequence ID" value="CAP94083.1"/>
    <property type="molecule type" value="Genomic_DNA"/>
</dbReference>
<dbReference type="RefSeq" id="XP_002561711.1">
    <property type="nucleotide sequence ID" value="XM_002561665.1"/>
</dbReference>
<dbReference type="STRING" id="500485.B6H9W0"/>
<dbReference type="GeneID" id="8311489"/>
<dbReference type="KEGG" id="pcs:N7525_010428"/>
<dbReference type="VEuPathDB" id="FungiDB:PCH_Pc16g14130"/>
<dbReference type="eggNOG" id="KOG4020">
    <property type="taxonomic scope" value="Eukaryota"/>
</dbReference>
<dbReference type="HOGENOM" id="CLU_067152_1_0_1"/>
<dbReference type="OMA" id="DFVMPVT"/>
<dbReference type="OrthoDB" id="311633at2759"/>
<dbReference type="BioCyc" id="PCHR:PC16G14130-MONOMER"/>
<dbReference type="Proteomes" id="UP000000724">
    <property type="component" value="Contig Pc00c16"/>
</dbReference>
<dbReference type="GO" id="GO:0005758">
    <property type="term" value="C:mitochondrial intermembrane space"/>
    <property type="evidence" value="ECO:0007669"/>
    <property type="project" value="UniProtKB-SubCell"/>
</dbReference>
<dbReference type="GO" id="GO:0051537">
    <property type="term" value="F:2 iron, 2 sulfur cluster binding"/>
    <property type="evidence" value="ECO:0007669"/>
    <property type="project" value="UniProtKB-UniRule"/>
</dbReference>
<dbReference type="GO" id="GO:0051539">
    <property type="term" value="F:4 iron, 4 sulfur cluster binding"/>
    <property type="evidence" value="ECO:0007669"/>
    <property type="project" value="UniProtKB-KW"/>
</dbReference>
<dbReference type="GO" id="GO:0009055">
    <property type="term" value="F:electron transfer activity"/>
    <property type="evidence" value="ECO:0007669"/>
    <property type="project" value="UniProtKB-UniRule"/>
</dbReference>
<dbReference type="GO" id="GO:0046872">
    <property type="term" value="F:metal ion binding"/>
    <property type="evidence" value="ECO:0007669"/>
    <property type="project" value="UniProtKB-KW"/>
</dbReference>
<dbReference type="GO" id="GO:0016226">
    <property type="term" value="P:iron-sulfur cluster assembly"/>
    <property type="evidence" value="ECO:0007669"/>
    <property type="project" value="UniProtKB-UniRule"/>
</dbReference>
<dbReference type="Gene3D" id="3.40.50.11000">
    <property type="entry name" value="Fe-S cluster assembly protein Dre2, N-terminal domain"/>
    <property type="match status" value="1"/>
</dbReference>
<dbReference type="HAMAP" id="MF_03115">
    <property type="entry name" value="Anamorsin"/>
    <property type="match status" value="1"/>
</dbReference>
<dbReference type="InterPro" id="IPR007785">
    <property type="entry name" value="Anamorsin"/>
</dbReference>
<dbReference type="InterPro" id="IPR046408">
    <property type="entry name" value="CIAPIN1"/>
</dbReference>
<dbReference type="InterPro" id="IPR031838">
    <property type="entry name" value="Dre2_N"/>
</dbReference>
<dbReference type="PANTHER" id="PTHR13273">
    <property type="entry name" value="ANAMORSIN"/>
    <property type="match status" value="1"/>
</dbReference>
<dbReference type="PANTHER" id="PTHR13273:SF14">
    <property type="entry name" value="ANAMORSIN"/>
    <property type="match status" value="1"/>
</dbReference>
<dbReference type="Pfam" id="PF05093">
    <property type="entry name" value="CIAPIN1"/>
    <property type="match status" value="1"/>
</dbReference>
<dbReference type="Pfam" id="PF16803">
    <property type="entry name" value="DRE2_N"/>
    <property type="match status" value="1"/>
</dbReference>
<keyword id="KW-0001">2Fe-2S</keyword>
<keyword id="KW-0004">4Fe-4S</keyword>
<keyword id="KW-0963">Cytoplasm</keyword>
<keyword id="KW-0408">Iron</keyword>
<keyword id="KW-0411">Iron-sulfur</keyword>
<keyword id="KW-0479">Metal-binding</keyword>
<keyword id="KW-0496">Mitochondrion</keyword>
<keyword id="KW-1185">Reference proteome</keyword>
<name>DRE2_PENRW</name>
<gene>
    <name evidence="1" type="primary">dre2</name>
    <name type="ORF">Pc16g14130</name>
</gene>
<reference key="1">
    <citation type="journal article" date="2008" name="Nat. Biotechnol.">
        <title>Genome sequencing and analysis of the filamentous fungus Penicillium chrysogenum.</title>
        <authorList>
            <person name="van den Berg M.A."/>
            <person name="Albang R."/>
            <person name="Albermann K."/>
            <person name="Badger J.H."/>
            <person name="Daran J.-M."/>
            <person name="Driessen A.J.M."/>
            <person name="Garcia-Estrada C."/>
            <person name="Fedorova N.D."/>
            <person name="Harris D.M."/>
            <person name="Heijne W.H.M."/>
            <person name="Joardar V.S."/>
            <person name="Kiel J.A.K.W."/>
            <person name="Kovalchuk A."/>
            <person name="Martin J.F."/>
            <person name="Nierman W.C."/>
            <person name="Nijland J.G."/>
            <person name="Pronk J.T."/>
            <person name="Roubos J.A."/>
            <person name="van der Klei I.J."/>
            <person name="van Peij N.N.M.E."/>
            <person name="Veenhuis M."/>
            <person name="von Doehren H."/>
            <person name="Wagner C."/>
            <person name="Wortman J.R."/>
            <person name="Bovenberg R.A.L."/>
        </authorList>
    </citation>
    <scope>NUCLEOTIDE SEQUENCE [LARGE SCALE GENOMIC DNA]</scope>
    <source>
        <strain>ATCC 28089 / DSM 1075 / NRRL 1951 / Wisconsin 54-1255</strain>
    </source>
</reference>
<evidence type="ECO:0000255" key="1">
    <source>
        <dbReference type="HAMAP-Rule" id="MF_03115"/>
    </source>
</evidence>
<protein>
    <recommendedName>
        <fullName evidence="1">Fe-S cluster assembly protein dre2</fullName>
    </recommendedName>
    <alternativeName>
        <fullName evidence="1">Anamorsin homolog</fullName>
    </alternativeName>
</protein>
<sequence>MAPSFITIDANDMDVDFSTTKPVQAKRTLLLAPPSIATQEDKLRDLFSTFDRSTTDLQMLDRLSAGVVSLPATTYDLVLILTDTDGTRRSEALQLLTRNVYTTLVPAMKAGAKLQTQDSALNASDAMEAVLAGLVQSDNGFEKPNFEPSAAVPLKFGLKKKNKPTPTAVPSIPTGFAAPMGIDSPVTNHDRDEDDELINEDTLLSEEDLTRPIMPPPECQPKTGRRRRACKDCTCGLADKLEAEDKERRANADKELNVMKLDTGDLNELDFTVEGKTGSCGSCALGDAFRCDGCPYMGLPAFKPGQEVQILNDVAQL</sequence>
<comment type="function">
    <text evidence="1">Component of the cytosolic iron-sulfur (Fe-S) protein assembly (CIA) machinery required for the maturation of extramitochondrial Fe-S proteins. Part of an electron transfer chain functioning in an early step of cytosolic Fe-S biogenesis, facilitating the de novo assembly of a [4Fe-4S] cluster on the scaffold complex cfd1-nbp35. Electrons are transferred to dre2 from NADPH via the FAD- and FMN-containing protein tah18. Tah18-dre2 are also required for the assembly of the diferric tyrosyl radical cofactor of ribonucleotide reductase (RNR), probably by providing electrons for reduction during radical cofactor maturation in the catalytic small subunit rnr2.</text>
</comment>
<comment type="cofactor">
    <cofactor evidence="1">
        <name>[2Fe-2S] cluster</name>
        <dbReference type="ChEBI" id="CHEBI:190135"/>
    </cofactor>
</comment>
<comment type="cofactor">
    <cofactor evidence="1">
        <name>[4Fe-4S] cluster</name>
        <dbReference type="ChEBI" id="CHEBI:49883"/>
    </cofactor>
</comment>
<comment type="subunit">
    <text evidence="1">Monomer. Interacts with tah18. Interacts with mia40.</text>
</comment>
<comment type="subcellular location">
    <subcellularLocation>
        <location evidence="1">Cytoplasm</location>
    </subcellularLocation>
    <subcellularLocation>
        <location evidence="1">Mitochondrion intermembrane space</location>
    </subcellularLocation>
</comment>
<comment type="domain">
    <text evidence="1">The C-terminal domain binds 2 Fe-S clusters but is otherwise mostly in an intrinsically disordered conformation.</text>
</comment>
<comment type="domain">
    <text evidence="1">The N-terminal domain has structural similarity with S-adenosyl-L-methionine-dependent methyltransferases, but does not bind S-adenosyl-L-methionine. It is required for correct assembly of the 2 Fe-S clusters.</text>
</comment>
<comment type="domain">
    <text evidence="1">The twin Cx2C motifs are involved in the recognition by the mitochondrial mia40-erv1 disulfide relay system. The formation of 2 disulfide bonds in the Cx2C motifs through dithiol/disulfide exchange reactions effectively traps the protein in the mitochondrial intermembrane space.</text>
</comment>
<comment type="similarity">
    <text evidence="1">Belongs to the anamorsin family.</text>
</comment>
<feature type="chain" id="PRO_0000392398" description="Fe-S cluster assembly protein dre2">
    <location>
        <begin position="1"/>
        <end position="317"/>
    </location>
</feature>
<feature type="region of interest" description="N-terminal SAM-like domain" evidence="1">
    <location>
        <begin position="22"/>
        <end position="152"/>
    </location>
</feature>
<feature type="region of interest" description="Linker" evidence="1">
    <location>
        <begin position="153"/>
        <end position="209"/>
    </location>
</feature>
<feature type="region of interest" description="Fe-S binding site A" evidence="1">
    <location>
        <begin position="219"/>
        <end position="235"/>
    </location>
</feature>
<feature type="region of interest" description="Fe-S binding site B" evidence="1">
    <location>
        <begin position="280"/>
        <end position="294"/>
    </location>
</feature>
<feature type="short sequence motif" description="Cx2C motif 1" evidence="1">
    <location>
        <begin position="280"/>
        <end position="283"/>
    </location>
</feature>
<feature type="short sequence motif" description="Cx2C motif 2" evidence="1">
    <location>
        <begin position="291"/>
        <end position="294"/>
    </location>
</feature>
<feature type="binding site" evidence="1">
    <location>
        <position position="219"/>
    </location>
    <ligand>
        <name>[2Fe-2S] cluster</name>
        <dbReference type="ChEBI" id="CHEBI:190135"/>
    </ligand>
</feature>
<feature type="binding site" evidence="1">
    <location>
        <position position="230"/>
    </location>
    <ligand>
        <name>[2Fe-2S] cluster</name>
        <dbReference type="ChEBI" id="CHEBI:190135"/>
    </ligand>
</feature>
<feature type="binding site" evidence="1">
    <location>
        <position position="233"/>
    </location>
    <ligand>
        <name>[2Fe-2S] cluster</name>
        <dbReference type="ChEBI" id="CHEBI:190135"/>
    </ligand>
</feature>
<feature type="binding site" evidence="1">
    <location>
        <position position="235"/>
    </location>
    <ligand>
        <name>[2Fe-2S] cluster</name>
        <dbReference type="ChEBI" id="CHEBI:190135"/>
    </ligand>
</feature>
<feature type="binding site" evidence="1">
    <location>
        <position position="280"/>
    </location>
    <ligand>
        <name>[4Fe-4S] cluster</name>
        <dbReference type="ChEBI" id="CHEBI:49883"/>
    </ligand>
</feature>
<feature type="binding site" evidence="1">
    <location>
        <position position="283"/>
    </location>
    <ligand>
        <name>[4Fe-4S] cluster</name>
        <dbReference type="ChEBI" id="CHEBI:49883"/>
    </ligand>
</feature>
<feature type="binding site" evidence="1">
    <location>
        <position position="291"/>
    </location>
    <ligand>
        <name>[4Fe-4S] cluster</name>
        <dbReference type="ChEBI" id="CHEBI:49883"/>
    </ligand>
</feature>
<feature type="binding site" evidence="1">
    <location>
        <position position="294"/>
    </location>
    <ligand>
        <name>[4Fe-4S] cluster</name>
        <dbReference type="ChEBI" id="CHEBI:49883"/>
    </ligand>
</feature>
<accession>B6H9W0</accession>